<proteinExistence type="predicted"/>
<organismHost>
    <name type="scientific">Mycoplasma</name>
    <dbReference type="NCBI Taxonomy" id="2093"/>
</organismHost>
<comment type="function">
    <text>May be a DNA-binding protein involved in virion nucleoprotein condensation.</text>
</comment>
<accession>P42547</accession>
<organism>
    <name type="scientific">Acholeplasma phage L2</name>
    <name type="common">Bacteriophage L2</name>
    <dbReference type="NCBI Taxonomy" id="46014"/>
    <lineage>
        <taxon>Viruses</taxon>
        <taxon>Viruses incertae sedis</taxon>
        <taxon>Plasmaviridae</taxon>
        <taxon>Plasmavirus</taxon>
    </lineage>
</organism>
<protein>
    <recommendedName>
        <fullName>Uncharacterized 17.2 kDa protein</fullName>
    </recommendedName>
    <alternativeName>
        <fullName>ORF12</fullName>
    </alternativeName>
</protein>
<sequence>MARSKKGKNLIYVLLGLVGLLAFFVLFVPTLTISASTPVWLENTITYATSFRDAFNVSGMVYMVILLGVLIAYLLLKYSKTRQNKDALKVVLAVVIAFAVYLLFTPALAAAFSDQVWLVDFSKLATDITSFIDTNNGFLTIIAGLGALTFFIVKKSK</sequence>
<keyword id="KW-0238">DNA-binding</keyword>
<keyword id="KW-1185">Reference proteome</keyword>
<reference key="1">
    <citation type="journal article" date="1994" name="Gene">
        <title>Sequence analysis of a unique temperature phage: mycoplasma virus L2.</title>
        <authorList>
            <person name="Maniloff J."/>
            <person name="Kampo G.J."/>
            <person name="Dascher C.C."/>
        </authorList>
    </citation>
    <scope>NUCLEOTIDE SEQUENCE [LARGE SCALE GENOMIC DNA]</scope>
</reference>
<name>YO12_BPL2</name>
<dbReference type="EMBL" id="L13696">
    <property type="protein sequence ID" value="AAA87968.1"/>
    <property type="molecule type" value="Genomic_DNA"/>
</dbReference>
<dbReference type="RefSeq" id="NP_040820.1">
    <property type="nucleotide sequence ID" value="NC_001447.1"/>
</dbReference>
<dbReference type="SMR" id="P42547"/>
<dbReference type="GeneID" id="1261016"/>
<dbReference type="KEGG" id="vg:1261016"/>
<dbReference type="Proteomes" id="UP000001573">
    <property type="component" value="Genome"/>
</dbReference>
<dbReference type="GO" id="GO:0003677">
    <property type="term" value="F:DNA binding"/>
    <property type="evidence" value="ECO:0007669"/>
    <property type="project" value="UniProtKB-KW"/>
</dbReference>
<feature type="chain" id="PRO_0000066359" description="Uncharacterized 17.2 kDa protein">
    <location>
        <begin position="1"/>
        <end position="157"/>
    </location>
</feature>